<comment type="function">
    <text evidence="1">Extracellular dipeptidyl-peptidase which removes N-terminal dipeptides sequentially from polypeptides having unsubstituted N-termini provided that the penultimate residue is proline.</text>
</comment>
<comment type="catalytic activity">
    <reaction>
        <text>Release of an N-terminal dipeptide, Xaa-Yaa-|-Zaa-, from a polypeptide, preferentially when Yaa is Pro, provided Zaa is neither Pro nor hydroxyproline.</text>
        <dbReference type="EC" id="3.4.14.5"/>
    </reaction>
</comment>
<comment type="subcellular location">
    <subcellularLocation>
        <location evidence="1">Secreted</location>
    </subcellularLocation>
</comment>
<comment type="similarity">
    <text evidence="3">Belongs to the peptidase S9B family.</text>
</comment>
<keyword id="KW-0031">Aminopeptidase</keyword>
<keyword id="KW-0325">Glycoprotein</keyword>
<keyword id="KW-0378">Hydrolase</keyword>
<keyword id="KW-0645">Protease</keyword>
<keyword id="KW-0964">Secreted</keyword>
<keyword id="KW-0720">Serine protease</keyword>
<keyword id="KW-0732">Signal</keyword>
<dbReference type="EC" id="3.4.14.5"/>
<dbReference type="EMBL" id="EQ963475">
    <property type="protein sequence ID" value="EED53639.1"/>
    <property type="molecule type" value="Genomic_DNA"/>
</dbReference>
<dbReference type="RefSeq" id="XP_002376885.1">
    <property type="nucleotide sequence ID" value="XM_002376844.1"/>
</dbReference>
<dbReference type="SMR" id="B8N970"/>
<dbReference type="STRING" id="332952.B8N970"/>
<dbReference type="ESTHER" id="aspor-DPPIV">
    <property type="family name" value="DPP4N_Peptidase_S9"/>
</dbReference>
<dbReference type="MEROPS" id="S09.008"/>
<dbReference type="GlyCosmos" id="B8N970">
    <property type="glycosylation" value="7 sites, No reported glycans"/>
</dbReference>
<dbReference type="EnsemblFungi" id="EED53639">
    <property type="protein sequence ID" value="EED53639"/>
    <property type="gene ID" value="AFLA_110160"/>
</dbReference>
<dbReference type="VEuPathDB" id="FungiDB:AFLA_006943"/>
<dbReference type="eggNOG" id="KOG2100">
    <property type="taxonomic scope" value="Eukaryota"/>
</dbReference>
<dbReference type="HOGENOM" id="CLU_006105_0_2_1"/>
<dbReference type="OMA" id="YTSTEHH"/>
<dbReference type="GO" id="GO:0005576">
    <property type="term" value="C:extracellular region"/>
    <property type="evidence" value="ECO:0007669"/>
    <property type="project" value="UniProtKB-SubCell"/>
</dbReference>
<dbReference type="GO" id="GO:0005886">
    <property type="term" value="C:plasma membrane"/>
    <property type="evidence" value="ECO:0007669"/>
    <property type="project" value="TreeGrafter"/>
</dbReference>
<dbReference type="GO" id="GO:0004177">
    <property type="term" value="F:aminopeptidase activity"/>
    <property type="evidence" value="ECO:0007669"/>
    <property type="project" value="UniProtKB-KW"/>
</dbReference>
<dbReference type="GO" id="GO:0008239">
    <property type="term" value="F:dipeptidyl-peptidase activity"/>
    <property type="evidence" value="ECO:0007669"/>
    <property type="project" value="UniProtKB-EC"/>
</dbReference>
<dbReference type="GO" id="GO:0008236">
    <property type="term" value="F:serine-type peptidase activity"/>
    <property type="evidence" value="ECO:0007669"/>
    <property type="project" value="UniProtKB-KW"/>
</dbReference>
<dbReference type="GO" id="GO:0006508">
    <property type="term" value="P:proteolysis"/>
    <property type="evidence" value="ECO:0007669"/>
    <property type="project" value="UniProtKB-KW"/>
</dbReference>
<dbReference type="FunFam" id="3.40.50.1820:FF:000003">
    <property type="entry name" value="Dipeptidyl peptidase 4"/>
    <property type="match status" value="1"/>
</dbReference>
<dbReference type="FunFam" id="2.140.10.30:FF:000003">
    <property type="entry name" value="Probable dipeptidyl peptidase 4"/>
    <property type="match status" value="1"/>
</dbReference>
<dbReference type="Gene3D" id="3.40.50.1820">
    <property type="entry name" value="alpha/beta hydrolase"/>
    <property type="match status" value="1"/>
</dbReference>
<dbReference type="Gene3D" id="2.140.10.30">
    <property type="entry name" value="Dipeptidylpeptidase IV, N-terminal domain"/>
    <property type="match status" value="1"/>
</dbReference>
<dbReference type="InterPro" id="IPR029058">
    <property type="entry name" value="AB_hydrolase_fold"/>
</dbReference>
<dbReference type="InterPro" id="IPR001375">
    <property type="entry name" value="Peptidase_S9_cat"/>
</dbReference>
<dbReference type="InterPro" id="IPR002469">
    <property type="entry name" value="Peptidase_S9B_N"/>
</dbReference>
<dbReference type="InterPro" id="IPR050278">
    <property type="entry name" value="Serine_Prot_S9B/DPPIV"/>
</dbReference>
<dbReference type="PANTHER" id="PTHR11731:SF162">
    <property type="entry name" value="DIPEPTIDYL PEPTIDASE 4-RELATED"/>
    <property type="match status" value="1"/>
</dbReference>
<dbReference type="PANTHER" id="PTHR11731">
    <property type="entry name" value="PROTEASE FAMILY S9B,C DIPEPTIDYL-PEPTIDASE IV-RELATED"/>
    <property type="match status" value="1"/>
</dbReference>
<dbReference type="Pfam" id="PF00930">
    <property type="entry name" value="DPPIV_N"/>
    <property type="match status" value="1"/>
</dbReference>
<dbReference type="Pfam" id="PF00326">
    <property type="entry name" value="Peptidase_S9"/>
    <property type="match status" value="1"/>
</dbReference>
<dbReference type="SUPFAM" id="SSF53474">
    <property type="entry name" value="alpha/beta-Hydrolases"/>
    <property type="match status" value="1"/>
</dbReference>
<dbReference type="SUPFAM" id="SSF82171">
    <property type="entry name" value="DPP6 N-terminal domain-like"/>
    <property type="match status" value="1"/>
</dbReference>
<sequence>MKYSKLLLLLVSVVQALDVPRKPHAPTGEGSKRLTFNETVVKQAITPTSRSVQWLSGAEDGSYVYAAEDGSLTIENIVTNESRTLIPADKIPTGKEAFNYWIHPDLSSVLWASNHTKQYRHSFFADYYVQDVESLKSVPLMPDQEGDIQYAQWSPVGNTIAFVRENDLYVWDNGTVTRITDDGGPDMFHGVPDWIYEEEILGDRYALWFSPDGEYLAYLSFNETGVPTYTVQYYMDNQEIAPAYPWELKIRYPKVSQTNPTVTLSLLNIASKEVKQAPIDAFESTDLIIGEVAWLTDTHTTVAAKAFNRVQDQQKVVAVDTASNKATVISDRDGTDGWLDNLLSMKYIGPIKPSDKDAYYIDISDHSGWAHLYLFPVSGGEPIPLTKGDWEVTSILSIDQERQLVYYLSTQHHSTERHLYSVSYSTFAVTPLVDDTVAAYWSASFSANSGYYILTYGGPDVPYQELYTTNSTKPLRTITDNAKVLEQIKDYALPNITYFELPLPSGETLNVMQRLPPGFSPDKKYPILFTPYGGPGAQEVTKRWQALNFKAYVASDSELEYVTWTVDNRGTGFKGRKFRSAVTRQLGLLEAEDQIYAAQQAANIPWIDADHIGIWGWSFGGYLTSKVLEKDSGAFTLGVITAPVSDWRFYDSMYTERYMKTLSTNEEGYETSAVRKTDGFKNVEGGFLIQHGTGDDNVHFQNSAALVDLLMGDGVSPEKLHSQWFTDSDHGISYHGGGVFLYKQLARKLYQEKNRQTQVLMHQWTKKDLEE</sequence>
<organism>
    <name type="scientific">Aspergillus flavus (strain ATCC 200026 / FGSC A1120 / IAM 13836 / NRRL 3357 / JCM 12722 / SRRC 167)</name>
    <dbReference type="NCBI Taxonomy" id="332952"/>
    <lineage>
        <taxon>Eukaryota</taxon>
        <taxon>Fungi</taxon>
        <taxon>Dikarya</taxon>
        <taxon>Ascomycota</taxon>
        <taxon>Pezizomycotina</taxon>
        <taxon>Eurotiomycetes</taxon>
        <taxon>Eurotiomycetidae</taxon>
        <taxon>Eurotiales</taxon>
        <taxon>Aspergillaceae</taxon>
        <taxon>Aspergillus</taxon>
        <taxon>Aspergillus subgen. Circumdati</taxon>
    </lineage>
</organism>
<accession>B8N970</accession>
<feature type="signal peptide" evidence="2">
    <location>
        <begin position="1"/>
        <end position="16"/>
    </location>
</feature>
<feature type="chain" id="PRO_0000397811" description="Probable dipeptidyl peptidase 4">
    <location>
        <begin position="17"/>
        <end position="771"/>
    </location>
</feature>
<feature type="active site" description="Charge relay system" evidence="1">
    <location>
        <position position="618"/>
    </location>
</feature>
<feature type="active site" description="Charge relay system" evidence="1">
    <location>
        <position position="695"/>
    </location>
</feature>
<feature type="active site" description="Charge relay system" evidence="1">
    <location>
        <position position="730"/>
    </location>
</feature>
<feature type="glycosylation site" description="N-linked (GlcNAc...) asparagine" evidence="2">
    <location>
        <position position="37"/>
    </location>
</feature>
<feature type="glycosylation site" description="N-linked (GlcNAc...) asparagine" evidence="2">
    <location>
        <position position="80"/>
    </location>
</feature>
<feature type="glycosylation site" description="N-linked (GlcNAc...) asparagine" evidence="2">
    <location>
        <position position="114"/>
    </location>
</feature>
<feature type="glycosylation site" description="N-linked (GlcNAc...) asparagine" evidence="2">
    <location>
        <position position="173"/>
    </location>
</feature>
<feature type="glycosylation site" description="N-linked (GlcNAc...) asparagine" evidence="2">
    <location>
        <position position="222"/>
    </location>
</feature>
<feature type="glycosylation site" description="N-linked (GlcNAc...) asparagine" evidence="2">
    <location>
        <position position="470"/>
    </location>
</feature>
<feature type="glycosylation site" description="N-linked (GlcNAc...) asparagine" evidence="2">
    <location>
        <position position="495"/>
    </location>
</feature>
<proteinExistence type="inferred from homology"/>
<gene>
    <name type="primary">dpp4</name>
    <name type="ORF">AFLA_110160</name>
</gene>
<evidence type="ECO:0000250" key="1"/>
<evidence type="ECO:0000255" key="2"/>
<evidence type="ECO:0000305" key="3"/>
<reference key="1">
    <citation type="journal article" date="2015" name="Genome Announc.">
        <title>Genome sequence of Aspergillus flavus NRRL 3357, a strain that causes aflatoxin contamination of food and feed.</title>
        <authorList>
            <person name="Nierman W.C."/>
            <person name="Yu J."/>
            <person name="Fedorova-Abrams N.D."/>
            <person name="Losada L."/>
            <person name="Cleveland T.E."/>
            <person name="Bhatnagar D."/>
            <person name="Bennett J.W."/>
            <person name="Dean R."/>
            <person name="Payne G.A."/>
        </authorList>
    </citation>
    <scope>NUCLEOTIDE SEQUENCE [LARGE SCALE GENOMIC DNA]</scope>
    <source>
        <strain>ATCC 200026 / FGSC A1120 / IAM 13836 / NRRL 3357 / JCM 12722 / SRRC 167</strain>
    </source>
</reference>
<protein>
    <recommendedName>
        <fullName>Probable dipeptidyl peptidase 4</fullName>
        <ecNumber>3.4.14.5</ecNumber>
    </recommendedName>
    <alternativeName>
        <fullName>Dipeptidyl peptidase IV</fullName>
        <shortName>DPP IV</shortName>
        <shortName>DppIV</shortName>
    </alternativeName>
</protein>
<name>DPP4_ASPFN</name>